<feature type="chain" id="PRO_1000079846" description="Large ribosomal subunit protein bL28">
    <location>
        <begin position="1"/>
        <end position="79"/>
    </location>
</feature>
<feature type="region of interest" description="Disordered" evidence="2">
    <location>
        <begin position="1"/>
        <end position="26"/>
    </location>
</feature>
<feature type="compositionally biased region" description="Polar residues" evidence="2">
    <location>
        <begin position="11"/>
        <end position="20"/>
    </location>
</feature>
<organism>
    <name type="scientific">Coxiella burnetii (strain RSA 331 / Henzerling II)</name>
    <dbReference type="NCBI Taxonomy" id="360115"/>
    <lineage>
        <taxon>Bacteria</taxon>
        <taxon>Pseudomonadati</taxon>
        <taxon>Pseudomonadota</taxon>
        <taxon>Gammaproteobacteria</taxon>
        <taxon>Legionellales</taxon>
        <taxon>Coxiellaceae</taxon>
        <taxon>Coxiella</taxon>
    </lineage>
</organism>
<dbReference type="EMBL" id="CP000890">
    <property type="protein sequence ID" value="ABX78360.1"/>
    <property type="molecule type" value="Genomic_DNA"/>
</dbReference>
<dbReference type="RefSeq" id="WP_005771445.1">
    <property type="nucleotide sequence ID" value="NC_010117.1"/>
</dbReference>
<dbReference type="SMR" id="A9NB26"/>
<dbReference type="KEGG" id="cbs:COXBURSA331_A0395"/>
<dbReference type="HOGENOM" id="CLU_064548_3_1_6"/>
<dbReference type="GO" id="GO:0022625">
    <property type="term" value="C:cytosolic large ribosomal subunit"/>
    <property type="evidence" value="ECO:0007669"/>
    <property type="project" value="TreeGrafter"/>
</dbReference>
<dbReference type="GO" id="GO:0003735">
    <property type="term" value="F:structural constituent of ribosome"/>
    <property type="evidence" value="ECO:0007669"/>
    <property type="project" value="InterPro"/>
</dbReference>
<dbReference type="GO" id="GO:0006412">
    <property type="term" value="P:translation"/>
    <property type="evidence" value="ECO:0007669"/>
    <property type="project" value="UniProtKB-UniRule"/>
</dbReference>
<dbReference type="FunFam" id="2.30.170.40:FF:000001">
    <property type="entry name" value="50S ribosomal protein L28"/>
    <property type="match status" value="1"/>
</dbReference>
<dbReference type="Gene3D" id="2.30.170.40">
    <property type="entry name" value="Ribosomal protein L28/L24"/>
    <property type="match status" value="1"/>
</dbReference>
<dbReference type="HAMAP" id="MF_00373">
    <property type="entry name" value="Ribosomal_bL28"/>
    <property type="match status" value="1"/>
</dbReference>
<dbReference type="InterPro" id="IPR026569">
    <property type="entry name" value="Ribosomal_bL28"/>
</dbReference>
<dbReference type="InterPro" id="IPR034704">
    <property type="entry name" value="Ribosomal_bL28/bL31-like_sf"/>
</dbReference>
<dbReference type="InterPro" id="IPR001383">
    <property type="entry name" value="Ribosomal_bL28_bact-type"/>
</dbReference>
<dbReference type="InterPro" id="IPR037147">
    <property type="entry name" value="Ribosomal_bL28_sf"/>
</dbReference>
<dbReference type="NCBIfam" id="TIGR00009">
    <property type="entry name" value="L28"/>
    <property type="match status" value="1"/>
</dbReference>
<dbReference type="PANTHER" id="PTHR13528">
    <property type="entry name" value="39S RIBOSOMAL PROTEIN L28, MITOCHONDRIAL"/>
    <property type="match status" value="1"/>
</dbReference>
<dbReference type="PANTHER" id="PTHR13528:SF2">
    <property type="entry name" value="LARGE RIBOSOMAL SUBUNIT PROTEIN BL28M"/>
    <property type="match status" value="1"/>
</dbReference>
<dbReference type="Pfam" id="PF00830">
    <property type="entry name" value="Ribosomal_L28"/>
    <property type="match status" value="1"/>
</dbReference>
<dbReference type="SUPFAM" id="SSF143800">
    <property type="entry name" value="L28p-like"/>
    <property type="match status" value="1"/>
</dbReference>
<protein>
    <recommendedName>
        <fullName evidence="1">Large ribosomal subunit protein bL28</fullName>
    </recommendedName>
    <alternativeName>
        <fullName evidence="3">50S ribosomal protein L28</fullName>
    </alternativeName>
</protein>
<comment type="similarity">
    <text evidence="1">Belongs to the bacterial ribosomal protein bL28 family.</text>
</comment>
<gene>
    <name evidence="1" type="primary">rpmB</name>
    <name type="ordered locus">COXBURSA331_A0395</name>
</gene>
<keyword id="KW-0687">Ribonucleoprotein</keyword>
<keyword id="KW-0689">Ribosomal protein</keyword>
<proteinExistence type="inferred from homology"/>
<reference key="1">
    <citation type="submission" date="2007-11" db="EMBL/GenBank/DDBJ databases">
        <title>Genome sequencing of phylogenetically and phenotypically diverse Coxiella burnetii isolates.</title>
        <authorList>
            <person name="Seshadri R."/>
            <person name="Samuel J.E."/>
        </authorList>
    </citation>
    <scope>NUCLEOTIDE SEQUENCE [LARGE SCALE GENOMIC DNA]</scope>
    <source>
        <strain>RSA 331 / Henzerling II</strain>
    </source>
</reference>
<evidence type="ECO:0000255" key="1">
    <source>
        <dbReference type="HAMAP-Rule" id="MF_00373"/>
    </source>
</evidence>
<evidence type="ECO:0000256" key="2">
    <source>
        <dbReference type="SAM" id="MobiDB-lite"/>
    </source>
</evidence>
<evidence type="ECO:0000305" key="3"/>
<name>RL28_COXBR</name>
<sequence length="79" mass="9244">MAKVCQVTGKRPQSGNNVSHANKKTNRRFLPNLKKRRFWLPDEKRFITLTVSTHGMRIIDKLGINAVLKKIREREKESK</sequence>
<accession>A9NB26</accession>